<reference key="1">
    <citation type="journal article" date="2010" name="PLoS ONE">
        <title>The complete multipartite genome sequence of Cupriavidus necator JMP134, a versatile pollutant degrader.</title>
        <authorList>
            <person name="Lykidis A."/>
            <person name="Perez-Pantoja D."/>
            <person name="Ledger T."/>
            <person name="Mavromatis K."/>
            <person name="Anderson I.J."/>
            <person name="Ivanova N.N."/>
            <person name="Hooper S.D."/>
            <person name="Lapidus A."/>
            <person name="Lucas S."/>
            <person name="Gonzalez B."/>
            <person name="Kyrpides N.C."/>
        </authorList>
    </citation>
    <scope>NUCLEOTIDE SEQUENCE [LARGE SCALE GENOMIC DNA]</scope>
    <source>
        <strain>JMP134 / LMG 1197</strain>
    </source>
</reference>
<comment type="function">
    <text evidence="1">Essential cell division protein. May link together the upstream cell division proteins, which are predominantly cytoplasmic, with the downstream cell division proteins, which are predominantly periplasmic.</text>
</comment>
<comment type="subunit">
    <text evidence="1">Part of a complex composed of FtsB, FtsL and FtsQ.</text>
</comment>
<comment type="subcellular location">
    <subcellularLocation>
        <location evidence="1">Cell inner membrane</location>
        <topology evidence="1">Single-pass type II membrane protein</topology>
    </subcellularLocation>
    <text evidence="1">Localizes to the division septum.</text>
</comment>
<comment type="similarity">
    <text evidence="1">Belongs to the FtsB family.</text>
</comment>
<keyword id="KW-0131">Cell cycle</keyword>
<keyword id="KW-0132">Cell division</keyword>
<keyword id="KW-0997">Cell inner membrane</keyword>
<keyword id="KW-1003">Cell membrane</keyword>
<keyword id="KW-0175">Coiled coil</keyword>
<keyword id="KW-0472">Membrane</keyword>
<keyword id="KW-0812">Transmembrane</keyword>
<keyword id="KW-1133">Transmembrane helix</keyword>
<feature type="chain" id="PRO_1000025717" description="Cell division protein FtsB">
    <location>
        <begin position="1"/>
        <end position="113"/>
    </location>
</feature>
<feature type="topological domain" description="Cytoplasmic" evidence="1">
    <location>
        <begin position="1"/>
        <end position="3"/>
    </location>
</feature>
<feature type="transmembrane region" description="Helical" evidence="1">
    <location>
        <begin position="4"/>
        <end position="21"/>
    </location>
</feature>
<feature type="topological domain" description="Periplasmic" evidence="1">
    <location>
        <begin position="22"/>
        <end position="113"/>
    </location>
</feature>
<feature type="region of interest" description="Disordered" evidence="2">
    <location>
        <begin position="93"/>
        <end position="113"/>
    </location>
</feature>
<feature type="coiled-coil region" evidence="1">
    <location>
        <begin position="34"/>
        <end position="63"/>
    </location>
</feature>
<name>FTSB_CUPPJ</name>
<gene>
    <name evidence="1" type="primary">ftsB</name>
    <name type="ordered locus">Reut_A1092</name>
</gene>
<protein>
    <recommendedName>
        <fullName evidence="1">Cell division protein FtsB</fullName>
    </recommendedName>
</protein>
<organism>
    <name type="scientific">Cupriavidus pinatubonensis (strain JMP 134 / LMG 1197)</name>
    <name type="common">Cupriavidus necator (strain JMP 134)</name>
    <dbReference type="NCBI Taxonomy" id="264198"/>
    <lineage>
        <taxon>Bacteria</taxon>
        <taxon>Pseudomonadati</taxon>
        <taxon>Pseudomonadota</taxon>
        <taxon>Betaproteobacteria</taxon>
        <taxon>Burkholderiales</taxon>
        <taxon>Burkholderiaceae</taxon>
        <taxon>Cupriavidus</taxon>
    </lineage>
</organism>
<proteinExistence type="inferred from homology"/>
<sequence length="113" mass="12623">MRLISLLLFVLLLAIQYPLWLGKGGWLRVWELNHQVQEQATRNQMLKLRNAKLEGEVKDLQDGTGAIEERARYELGMVKDGEVFVQFVAPAPKVSATPPLPPPPNSPAATGRH</sequence>
<dbReference type="EMBL" id="CP000090">
    <property type="protein sequence ID" value="AAZ60470.1"/>
    <property type="molecule type" value="Genomic_DNA"/>
</dbReference>
<dbReference type="SMR" id="Q473G3"/>
<dbReference type="STRING" id="264198.Reut_A1092"/>
<dbReference type="KEGG" id="reu:Reut_A1092"/>
<dbReference type="eggNOG" id="COG2919">
    <property type="taxonomic scope" value="Bacteria"/>
</dbReference>
<dbReference type="HOGENOM" id="CLU_134863_5_0_4"/>
<dbReference type="OrthoDB" id="7061211at2"/>
<dbReference type="GO" id="GO:0032153">
    <property type="term" value="C:cell division site"/>
    <property type="evidence" value="ECO:0007669"/>
    <property type="project" value="UniProtKB-UniRule"/>
</dbReference>
<dbReference type="GO" id="GO:0030428">
    <property type="term" value="C:cell septum"/>
    <property type="evidence" value="ECO:0007669"/>
    <property type="project" value="TreeGrafter"/>
</dbReference>
<dbReference type="GO" id="GO:0005886">
    <property type="term" value="C:plasma membrane"/>
    <property type="evidence" value="ECO:0007669"/>
    <property type="project" value="UniProtKB-SubCell"/>
</dbReference>
<dbReference type="GO" id="GO:0043093">
    <property type="term" value="P:FtsZ-dependent cytokinesis"/>
    <property type="evidence" value="ECO:0007669"/>
    <property type="project" value="UniProtKB-UniRule"/>
</dbReference>
<dbReference type="HAMAP" id="MF_00599">
    <property type="entry name" value="FtsB"/>
    <property type="match status" value="1"/>
</dbReference>
<dbReference type="InterPro" id="IPR023081">
    <property type="entry name" value="Cell_div_FtsB"/>
</dbReference>
<dbReference type="InterPro" id="IPR007060">
    <property type="entry name" value="FtsL/DivIC"/>
</dbReference>
<dbReference type="NCBIfam" id="NF002058">
    <property type="entry name" value="PRK00888.1"/>
    <property type="match status" value="1"/>
</dbReference>
<dbReference type="PANTHER" id="PTHR37485">
    <property type="entry name" value="CELL DIVISION PROTEIN FTSB"/>
    <property type="match status" value="1"/>
</dbReference>
<dbReference type="PANTHER" id="PTHR37485:SF1">
    <property type="entry name" value="CELL DIVISION PROTEIN FTSB"/>
    <property type="match status" value="1"/>
</dbReference>
<dbReference type="Pfam" id="PF04977">
    <property type="entry name" value="DivIC"/>
    <property type="match status" value="1"/>
</dbReference>
<evidence type="ECO:0000255" key="1">
    <source>
        <dbReference type="HAMAP-Rule" id="MF_00599"/>
    </source>
</evidence>
<evidence type="ECO:0000256" key="2">
    <source>
        <dbReference type="SAM" id="MobiDB-lite"/>
    </source>
</evidence>
<accession>Q473G3</accession>